<reference key="1">
    <citation type="journal article" date="2000" name="Nature">
        <title>DNA sequence of both chromosomes of the cholera pathogen Vibrio cholerae.</title>
        <authorList>
            <person name="Heidelberg J.F."/>
            <person name="Eisen J.A."/>
            <person name="Nelson W.C."/>
            <person name="Clayton R.A."/>
            <person name="Gwinn M.L."/>
            <person name="Dodson R.J."/>
            <person name="Haft D.H."/>
            <person name="Hickey E.K."/>
            <person name="Peterson J.D."/>
            <person name="Umayam L.A."/>
            <person name="Gill S.R."/>
            <person name="Nelson K.E."/>
            <person name="Read T.D."/>
            <person name="Tettelin H."/>
            <person name="Richardson D.L."/>
            <person name="Ermolaeva M.D."/>
            <person name="Vamathevan J.J."/>
            <person name="Bass S."/>
            <person name="Qin H."/>
            <person name="Dragoi I."/>
            <person name="Sellers P."/>
            <person name="McDonald L.A."/>
            <person name="Utterback T.R."/>
            <person name="Fleischmann R.D."/>
            <person name="Nierman W.C."/>
            <person name="White O."/>
            <person name="Salzberg S.L."/>
            <person name="Smith H.O."/>
            <person name="Colwell R.R."/>
            <person name="Mekalanos J.J."/>
            <person name="Venter J.C."/>
            <person name="Fraser C.M."/>
        </authorList>
    </citation>
    <scope>NUCLEOTIDE SEQUENCE [LARGE SCALE GENOMIC DNA]</scope>
    <source>
        <strain>ATCC 39315 / El Tor Inaba N16961</strain>
    </source>
</reference>
<reference key="2">
    <citation type="journal article" date="2021" name="Nucleic Acids Res.">
        <title>Vibrio cholerae FruR facilitates binding of RNA polymerase to the fru promoter in the presence of fructose 1-phosphate.</title>
        <authorList>
            <person name="Yoon C.K."/>
            <person name="Kang D."/>
            <person name="Kim M.K."/>
            <person name="Seok Y.J."/>
        </authorList>
    </citation>
    <scope>FUNCTION</scope>
    <scope>DNA-BINDING</scope>
    <scope>ACTIVITY REGULATION</scope>
    <scope>SUBUNIT</scope>
    <scope>INDUCTION</scope>
    <scope>DISRUPTION PHENOTYPE</scope>
    <source>
        <strain>ATCC 39315 / El Tor Inaba N16961</strain>
    </source>
</reference>
<reference key="3">
    <citation type="journal article" date="2021" name="J. Bacteriol.">
        <title>Cra and cAMP receptor protein have opposing roles in the regulation of fruB in Vibrio cholerae.</title>
        <authorList>
            <person name="Beck C."/>
            <person name="Perry S."/>
            <person name="Stoebel D.M."/>
            <person name="Liu J.M."/>
        </authorList>
    </citation>
    <scope>FUNCTION</scope>
    <scope>INDUCTION</scope>
    <scope>DISRUPTION PHENOTYPE</scope>
    <source>
        <strain>ATCC 39315 / El Tor Inaba N16961</strain>
    </source>
</reference>
<organism>
    <name type="scientific">Vibrio cholerae serotype O1 (strain ATCC 39315 / El Tor Inaba N16961)</name>
    <dbReference type="NCBI Taxonomy" id="243277"/>
    <lineage>
        <taxon>Bacteria</taxon>
        <taxon>Pseudomonadati</taxon>
        <taxon>Pseudomonadota</taxon>
        <taxon>Gammaproteobacteria</taxon>
        <taxon>Vibrionales</taxon>
        <taxon>Vibrionaceae</taxon>
        <taxon>Vibrio</taxon>
    </lineage>
</organism>
<keyword id="KW-0002">3D-structure</keyword>
<keyword id="KW-0010">Activator</keyword>
<keyword id="KW-0238">DNA-binding</keyword>
<keyword id="KW-1185">Reference proteome</keyword>
<keyword id="KW-0678">Repressor</keyword>
<keyword id="KW-0804">Transcription</keyword>
<keyword id="KW-0805">Transcription regulation</keyword>
<dbReference type="EMBL" id="AE003853">
    <property type="protein sequence ID" value="AAF96422.1"/>
    <property type="molecule type" value="Genomic_DNA"/>
</dbReference>
<dbReference type="PIR" id="E82450">
    <property type="entry name" value="E82450"/>
</dbReference>
<dbReference type="RefSeq" id="NP_232910.1">
    <property type="nucleotide sequence ID" value="NC_002506.1"/>
</dbReference>
<dbReference type="RefSeq" id="WP_000171125.1">
    <property type="nucleotide sequence ID" value="NZ_LT906615.1"/>
</dbReference>
<dbReference type="PDB" id="7X7H">
    <property type="method" value="X-ray"/>
    <property type="resolution" value="2.00 A"/>
    <property type="chains" value="A/C=1-326"/>
</dbReference>
<dbReference type="PDBsum" id="7X7H"/>
<dbReference type="SMR" id="Q9KM69"/>
<dbReference type="STRING" id="243277.VC_A0519"/>
<dbReference type="DNASU" id="2612773"/>
<dbReference type="EnsemblBacteria" id="AAF96422">
    <property type="protein sequence ID" value="AAF96422"/>
    <property type="gene ID" value="VC_A0519"/>
</dbReference>
<dbReference type="GeneID" id="69722254"/>
<dbReference type="KEGG" id="vch:VC_A0519"/>
<dbReference type="PATRIC" id="fig|243277.26.peg.3145"/>
<dbReference type="eggNOG" id="COG1609">
    <property type="taxonomic scope" value="Bacteria"/>
</dbReference>
<dbReference type="HOGENOM" id="CLU_037628_6_0_6"/>
<dbReference type="Proteomes" id="UP000000584">
    <property type="component" value="Chromosome 2"/>
</dbReference>
<dbReference type="GO" id="GO:0003700">
    <property type="term" value="F:DNA-binding transcription factor activity"/>
    <property type="evidence" value="ECO:0000318"/>
    <property type="project" value="GO_Central"/>
</dbReference>
<dbReference type="GO" id="GO:0000976">
    <property type="term" value="F:transcription cis-regulatory region binding"/>
    <property type="evidence" value="ECO:0000318"/>
    <property type="project" value="GO_Central"/>
</dbReference>
<dbReference type="GO" id="GO:0006355">
    <property type="term" value="P:regulation of DNA-templated transcription"/>
    <property type="evidence" value="ECO:0000318"/>
    <property type="project" value="GO_Central"/>
</dbReference>
<dbReference type="GO" id="GO:0009750">
    <property type="term" value="P:response to fructose"/>
    <property type="evidence" value="ECO:0007669"/>
    <property type="project" value="InterPro"/>
</dbReference>
<dbReference type="CDD" id="cd01392">
    <property type="entry name" value="HTH_LacI"/>
    <property type="match status" value="1"/>
</dbReference>
<dbReference type="FunFam" id="1.10.260.40:FF:000008">
    <property type="entry name" value="Fructose repressor (Catabolite repressor/activator)"/>
    <property type="match status" value="1"/>
</dbReference>
<dbReference type="FunFam" id="3.40.50.2300:FF:000022">
    <property type="entry name" value="Fructose repressor (Catabolite repressor/activator)"/>
    <property type="match status" value="1"/>
</dbReference>
<dbReference type="Gene3D" id="3.40.50.2300">
    <property type="match status" value="2"/>
</dbReference>
<dbReference type="Gene3D" id="1.10.260.40">
    <property type="entry name" value="lambda repressor-like DNA-binding domains"/>
    <property type="match status" value="1"/>
</dbReference>
<dbReference type="InterPro" id="IPR012781">
    <property type="entry name" value="Fruct_sucro_rep"/>
</dbReference>
<dbReference type="InterPro" id="IPR000843">
    <property type="entry name" value="HTH_LacI"/>
</dbReference>
<dbReference type="InterPro" id="IPR010982">
    <property type="entry name" value="Lambda_DNA-bd_dom_sf"/>
</dbReference>
<dbReference type="InterPro" id="IPR001761">
    <property type="entry name" value="Peripla_BP/Lac1_sug-bd_dom"/>
</dbReference>
<dbReference type="InterPro" id="IPR028082">
    <property type="entry name" value="Peripla_BP_I"/>
</dbReference>
<dbReference type="NCBIfam" id="TIGR02417">
    <property type="entry name" value="fruct_sucro_rep"/>
    <property type="match status" value="1"/>
</dbReference>
<dbReference type="NCBIfam" id="NF008452">
    <property type="entry name" value="PRK11303.1"/>
    <property type="match status" value="1"/>
</dbReference>
<dbReference type="PANTHER" id="PTHR30146:SF45">
    <property type="entry name" value="CATABOLITE REPRESSOR_ACTIVATOR"/>
    <property type="match status" value="1"/>
</dbReference>
<dbReference type="PANTHER" id="PTHR30146">
    <property type="entry name" value="LACI-RELATED TRANSCRIPTIONAL REPRESSOR"/>
    <property type="match status" value="1"/>
</dbReference>
<dbReference type="Pfam" id="PF00356">
    <property type="entry name" value="LacI"/>
    <property type="match status" value="1"/>
</dbReference>
<dbReference type="Pfam" id="PF00532">
    <property type="entry name" value="Peripla_BP_1"/>
    <property type="match status" value="1"/>
</dbReference>
<dbReference type="SMART" id="SM00354">
    <property type="entry name" value="HTH_LACI"/>
    <property type="match status" value="1"/>
</dbReference>
<dbReference type="SUPFAM" id="SSF47413">
    <property type="entry name" value="lambda repressor-like DNA-binding domains"/>
    <property type="match status" value="1"/>
</dbReference>
<dbReference type="SUPFAM" id="SSF53822">
    <property type="entry name" value="Periplasmic binding protein-like I"/>
    <property type="match status" value="1"/>
</dbReference>
<dbReference type="PROSITE" id="PS00356">
    <property type="entry name" value="HTH_LACI_1"/>
    <property type="match status" value="1"/>
</dbReference>
<dbReference type="PROSITE" id="PS50932">
    <property type="entry name" value="HTH_LACI_2"/>
    <property type="match status" value="1"/>
</dbReference>
<sequence>MTLDEIAKLAGVSKTTASYVINGKAQKYRISEKTQHKVMAVVEQYNFRPDHAASALRAGNSRSFGLIIPDLENTSYARLAKLLEQNSRQAGYQILIACSDDDPQIEMAAAEALVSRRIDALFVASGIPSASEYYLKLQQSGTPVIAIDRALDDEYFSCVISEDFGAAFELTRSVLTQDVHSVGLVGALPELNVSREREQGFAMAVKQRGLPTTLGYGEHFNREEGRKVFAKWVANDQLPDAVVATSYTLLEGILDVLLEQPELMQKVRLATFGDNRLLDFLPIRVNSLPQQFELIADSALALALNASAKRYQTGIELIPRQLKVRT</sequence>
<accession>Q9KM69</accession>
<proteinExistence type="evidence at protein level"/>
<name>FRUR_VIBCH</name>
<gene>
    <name evidence="4" type="primary">fruR</name>
    <name evidence="5" type="synonym">cra</name>
    <name evidence="7" type="ordered locus">VC_A0519</name>
</gene>
<protein>
    <recommendedName>
        <fullName evidence="6">Fructose operon regulatory protein</fullName>
    </recommendedName>
    <alternativeName>
        <fullName evidence="5">Catabolite repressor/activator</fullName>
    </alternativeName>
</protein>
<comment type="function">
    <text evidence="2 3">Regulates the expression of the fruBKA (fru) operon, which encodes proteins involved in the import and metabolism of fructose (PubMed:33476373, PubMed:33649152). In the absence of fructose 1-phosphate (F1P), binds to the promoter region of fruB, interferes with the binding of the RNA polymerase (RNAP) to the promoter and represses the expression of the operon (PubMed:33476373, PubMed:33649152). In the presence of F1P, activates the transcription of the fru operon by facilitating the binding of RNAP to the promoter (PubMed:33476373). Essential for the expression of the fru operon and thus for growth on fructose (PubMed:33476373).</text>
</comment>
<comment type="activity regulation">
    <text evidence="2">Interaction with F1P may induce a structural change in the DNA spacer region between the -35 and -10 elements, thereby facilitating RNAP binding to the promoter to trigger the transcriptional activation of the fru operon. Interaction with F1P does not release FruR from its binding sequence.</text>
</comment>
<comment type="subunit">
    <text evidence="2">Homodimer.</text>
</comment>
<comment type="induction">
    <text evidence="2 3">Expressed at the highest levels in fructose media (PubMed:33476373, PubMed:33649152). Expression can be modulated by CRP in the presence of fructose and glucose (PubMed:33649152).</text>
</comment>
<comment type="disruption phenotype">
    <text evidence="2 3">Does not affect growth on glucose. Mutant shows a severe growth defect on fructose (PubMed:33476373). In the absence of the gene, expression of the fru genes increases in glucose medium (PubMed:33649152).</text>
</comment>
<evidence type="ECO:0000255" key="1">
    <source>
        <dbReference type="PROSITE-ProRule" id="PRU00111"/>
    </source>
</evidence>
<evidence type="ECO:0000269" key="2">
    <source>
    </source>
</evidence>
<evidence type="ECO:0000269" key="3">
    <source>
    </source>
</evidence>
<evidence type="ECO:0000303" key="4">
    <source>
    </source>
</evidence>
<evidence type="ECO:0000303" key="5">
    <source>
    </source>
</evidence>
<evidence type="ECO:0000305" key="6"/>
<evidence type="ECO:0000312" key="7">
    <source>
        <dbReference type="EMBL" id="AAF96422.1"/>
    </source>
</evidence>
<evidence type="ECO:0007829" key="8">
    <source>
        <dbReference type="PDB" id="7X7H"/>
    </source>
</evidence>
<feature type="chain" id="PRO_0000453369" description="Fructose operon regulatory protein">
    <location>
        <begin position="1"/>
        <end position="326"/>
    </location>
</feature>
<feature type="domain" description="HTH lacI-type" evidence="1">
    <location>
        <begin position="1"/>
        <end position="58"/>
    </location>
</feature>
<feature type="DNA-binding region" description="H-T-H motif" evidence="1">
    <location>
        <begin position="3"/>
        <end position="22"/>
    </location>
</feature>
<feature type="strand" evidence="8">
    <location>
        <begin position="63"/>
        <end position="69"/>
    </location>
</feature>
<feature type="helix" evidence="8">
    <location>
        <begin position="74"/>
        <end position="89"/>
    </location>
</feature>
<feature type="strand" evidence="8">
    <location>
        <begin position="93"/>
        <end position="98"/>
    </location>
</feature>
<feature type="helix" evidence="8">
    <location>
        <begin position="103"/>
        <end position="115"/>
    </location>
</feature>
<feature type="strand" evidence="8">
    <location>
        <begin position="121"/>
        <end position="123"/>
    </location>
</feature>
<feature type="helix" evidence="8">
    <location>
        <begin position="130"/>
        <end position="139"/>
    </location>
</feature>
<feature type="strand" evidence="8">
    <location>
        <begin position="144"/>
        <end position="149"/>
    </location>
</feature>
<feature type="turn" evidence="8">
    <location>
        <begin position="153"/>
        <end position="155"/>
    </location>
</feature>
<feature type="strand" evidence="8">
    <location>
        <begin position="156"/>
        <end position="161"/>
    </location>
</feature>
<feature type="helix" evidence="8">
    <location>
        <begin position="164"/>
        <end position="172"/>
    </location>
</feature>
<feature type="strand" evidence="8">
    <location>
        <begin position="182"/>
        <end position="187"/>
    </location>
</feature>
<feature type="helix" evidence="8">
    <location>
        <begin position="192"/>
        <end position="207"/>
    </location>
</feature>
<feature type="strand" evidence="8">
    <location>
        <begin position="212"/>
        <end position="221"/>
    </location>
</feature>
<feature type="helix" evidence="8">
    <location>
        <begin position="222"/>
        <end position="234"/>
    </location>
</feature>
<feature type="strand" evidence="8">
    <location>
        <begin position="240"/>
        <end position="246"/>
    </location>
</feature>
<feature type="helix" evidence="8">
    <location>
        <begin position="247"/>
        <end position="259"/>
    </location>
</feature>
<feature type="helix" evidence="8">
    <location>
        <begin position="261"/>
        <end position="263"/>
    </location>
</feature>
<feature type="strand" evidence="8">
    <location>
        <begin position="266"/>
        <end position="273"/>
    </location>
</feature>
<feature type="helix" evidence="8">
    <location>
        <begin position="276"/>
        <end position="280"/>
    </location>
</feature>
<feature type="strand" evidence="8">
    <location>
        <begin position="286"/>
        <end position="288"/>
    </location>
</feature>
<feature type="helix" evidence="8">
    <location>
        <begin position="292"/>
        <end position="307"/>
    </location>
</feature>
<feature type="strand" evidence="8">
    <location>
        <begin position="314"/>
        <end position="318"/>
    </location>
</feature>